<keyword id="KW-0963">Cytoplasm</keyword>
<keyword id="KW-0227">DNA damage</keyword>
<keyword id="KW-0234">DNA repair</keyword>
<keyword id="KW-0255">Endonuclease</keyword>
<keyword id="KW-0378">Hydrolase</keyword>
<keyword id="KW-0540">Nuclease</keyword>
<keyword id="KW-1185">Reference proteome</keyword>
<protein>
    <recommendedName>
        <fullName evidence="1">DNA mismatch repair protein MutH</fullName>
    </recommendedName>
    <alternativeName>
        <fullName evidence="1">Methyl-directed mismatch repair protein</fullName>
    </alternativeName>
</protein>
<proteinExistence type="inferred from homology"/>
<name>MUTH_SALTY</name>
<dbReference type="EMBL" id="AE006468">
    <property type="protein sequence ID" value="AAL21881.1"/>
    <property type="molecule type" value="Genomic_DNA"/>
</dbReference>
<dbReference type="EMBL" id="AJ005754">
    <property type="protein sequence ID" value="CAB41691.1"/>
    <property type="molecule type" value="Genomic_DNA"/>
</dbReference>
<dbReference type="RefSeq" id="NP_461922.1">
    <property type="nucleotide sequence ID" value="NC_003197.2"/>
</dbReference>
<dbReference type="RefSeq" id="WP_001274930.1">
    <property type="nucleotide sequence ID" value="NC_003197.2"/>
</dbReference>
<dbReference type="SMR" id="Q8ZMA8"/>
<dbReference type="STRING" id="99287.STM3005"/>
<dbReference type="PaxDb" id="99287-STM3005"/>
<dbReference type="GeneID" id="1254528"/>
<dbReference type="KEGG" id="stm:STM3005"/>
<dbReference type="PATRIC" id="fig|99287.12.peg.3180"/>
<dbReference type="HOGENOM" id="CLU_086669_0_0_6"/>
<dbReference type="OMA" id="WEELMDY"/>
<dbReference type="PhylomeDB" id="Q8ZMA8"/>
<dbReference type="BioCyc" id="SENT99287:STM3005-MONOMER"/>
<dbReference type="Proteomes" id="UP000001014">
    <property type="component" value="Chromosome"/>
</dbReference>
<dbReference type="GO" id="GO:0005737">
    <property type="term" value="C:cytoplasm"/>
    <property type="evidence" value="ECO:0007669"/>
    <property type="project" value="UniProtKB-SubCell"/>
</dbReference>
<dbReference type="GO" id="GO:0003677">
    <property type="term" value="F:DNA binding"/>
    <property type="evidence" value="ECO:0007669"/>
    <property type="project" value="InterPro"/>
</dbReference>
<dbReference type="GO" id="GO:0004519">
    <property type="term" value="F:endonuclease activity"/>
    <property type="evidence" value="ECO:0007669"/>
    <property type="project" value="UniProtKB-UniRule"/>
</dbReference>
<dbReference type="GO" id="GO:0006304">
    <property type="term" value="P:DNA modification"/>
    <property type="evidence" value="ECO:0007669"/>
    <property type="project" value="InterPro"/>
</dbReference>
<dbReference type="GO" id="GO:0006298">
    <property type="term" value="P:mismatch repair"/>
    <property type="evidence" value="ECO:0007669"/>
    <property type="project" value="UniProtKB-UniRule"/>
</dbReference>
<dbReference type="CDD" id="cd00583">
    <property type="entry name" value="MutH-like"/>
    <property type="match status" value="1"/>
</dbReference>
<dbReference type="FunFam" id="3.40.600.10:FF:000001">
    <property type="entry name" value="DNA mismatch repair protein MutH"/>
    <property type="match status" value="1"/>
</dbReference>
<dbReference type="Gene3D" id="3.40.600.10">
    <property type="entry name" value="DNA mismatch repair MutH/Restriction endonuclease, type II"/>
    <property type="match status" value="1"/>
</dbReference>
<dbReference type="HAMAP" id="MF_00759">
    <property type="entry name" value="MutH"/>
    <property type="match status" value="1"/>
</dbReference>
<dbReference type="InterPro" id="IPR004230">
    <property type="entry name" value="DNA_mismatch_repair_MutH"/>
</dbReference>
<dbReference type="InterPro" id="IPR011337">
    <property type="entry name" value="DNA_rep_MutH/RE_typeII_Sau3AI"/>
</dbReference>
<dbReference type="InterPro" id="IPR037057">
    <property type="entry name" value="DNA_rep_MutH/T2_RE_sf"/>
</dbReference>
<dbReference type="InterPro" id="IPR011335">
    <property type="entry name" value="Restrct_endonuc-II-like"/>
</dbReference>
<dbReference type="NCBIfam" id="TIGR02248">
    <property type="entry name" value="mutH_TIGR"/>
    <property type="match status" value="1"/>
</dbReference>
<dbReference type="NCBIfam" id="NF003458">
    <property type="entry name" value="PRK05070.1"/>
    <property type="match status" value="1"/>
</dbReference>
<dbReference type="Pfam" id="PF02976">
    <property type="entry name" value="MutH"/>
    <property type="match status" value="1"/>
</dbReference>
<dbReference type="SMART" id="SM00927">
    <property type="entry name" value="MutH"/>
    <property type="match status" value="1"/>
</dbReference>
<dbReference type="SUPFAM" id="SSF52980">
    <property type="entry name" value="Restriction endonuclease-like"/>
    <property type="match status" value="1"/>
</dbReference>
<sequence length="231" mass="25410">MSALCPLLTPPASEALLLAQARQLSGYTLGELAAMAGITTPKDLKRDKGWIGVLLEIWLGASAGSKPEQDFAALGVELKTIPVDSLGRPLETTFVCVAPLTGNSGVTWETSHVRHKLKRVLWVPVEGDRSIPLAERRVGSPLLWSPSEEEDRQLRLDWEELMDMIVLGQVERITARHGEVLQLRPKAANARALTEAIGARGEPILTLPRGFYLKKNFTQALLARHFLLQNP</sequence>
<feature type="chain" id="PRO_0000198673" description="DNA mismatch repair protein MutH">
    <location>
        <begin position="1"/>
        <end position="231"/>
    </location>
</feature>
<reference key="1">
    <citation type="journal article" date="2001" name="Nature">
        <title>Complete genome sequence of Salmonella enterica serovar Typhimurium LT2.</title>
        <authorList>
            <person name="McClelland M."/>
            <person name="Sanderson K.E."/>
            <person name="Spieth J."/>
            <person name="Clifton S.W."/>
            <person name="Latreille P."/>
            <person name="Courtney L."/>
            <person name="Porwollik S."/>
            <person name="Ali J."/>
            <person name="Dante M."/>
            <person name="Du F."/>
            <person name="Hou S."/>
            <person name="Layman D."/>
            <person name="Leonard S."/>
            <person name="Nguyen C."/>
            <person name="Scott K."/>
            <person name="Holmes A."/>
            <person name="Grewal N."/>
            <person name="Mulvaney E."/>
            <person name="Ryan E."/>
            <person name="Sun H."/>
            <person name="Florea L."/>
            <person name="Miller W."/>
            <person name="Stoneking T."/>
            <person name="Nhan M."/>
            <person name="Waterston R."/>
            <person name="Wilson R.K."/>
        </authorList>
    </citation>
    <scope>NUCLEOTIDE SEQUENCE [LARGE SCALE GENOMIC DNA]</scope>
    <source>
        <strain>LT2 / SGSC1412 / ATCC 700720</strain>
    </source>
</reference>
<reference key="2">
    <citation type="submission" date="1998-04" db="EMBL/GenBank/DDBJ databases">
        <authorList>
            <person name="Denamur E."/>
        </authorList>
    </citation>
    <scope>NUCLEOTIDE SEQUENCE [GENOMIC DNA] OF 58-157</scope>
</reference>
<gene>
    <name evidence="1" type="primary">mutH</name>
    <name type="ordered locus">STM3005</name>
</gene>
<evidence type="ECO:0000255" key="1">
    <source>
        <dbReference type="HAMAP-Rule" id="MF_00759"/>
    </source>
</evidence>
<organism>
    <name type="scientific">Salmonella typhimurium (strain LT2 / SGSC1412 / ATCC 700720)</name>
    <dbReference type="NCBI Taxonomy" id="99287"/>
    <lineage>
        <taxon>Bacteria</taxon>
        <taxon>Pseudomonadati</taxon>
        <taxon>Pseudomonadota</taxon>
        <taxon>Gammaproteobacteria</taxon>
        <taxon>Enterobacterales</taxon>
        <taxon>Enterobacteriaceae</taxon>
        <taxon>Salmonella</taxon>
    </lineage>
</organism>
<comment type="function">
    <text evidence="1">Sequence-specific endonuclease that cleaves unmethylated GATC sequences. It is involved in DNA mismatch repair.</text>
</comment>
<comment type="subcellular location">
    <subcellularLocation>
        <location evidence="1">Cytoplasm</location>
    </subcellularLocation>
</comment>
<comment type="similarity">
    <text evidence="1">Belongs to the MutH family.</text>
</comment>
<accession>Q8ZMA8</accession>
<accession>Q9X9C1</accession>